<reference key="1">
    <citation type="journal article" date="1998" name="Curr. Genet.">
        <title>A ribosomal protein gene cluster is encoded in the mitochondrial DNA of Dictyostelium discoideum: UGA termination codons and similarity of gene order to Acanthamoeba castellanii.</title>
        <authorList>
            <person name="Iwamoto M."/>
            <person name="Pi M."/>
            <person name="Kurihara M."/>
            <person name="Morio T."/>
            <person name="Tanaka Y."/>
        </authorList>
    </citation>
    <scope>NUCLEOTIDE SEQUENCE [GENOMIC DNA]</scope>
    <scope>IDENTIFICATION</scope>
    <source>
        <strain>AX3</strain>
    </source>
</reference>
<reference key="2">
    <citation type="journal article" date="2000" name="Mol. Gen. Genet.">
        <title>The mitochondrial DNA of Dictyostelium discoideum: complete sequence, gene content and genome organization.</title>
        <authorList>
            <person name="Ogawa S."/>
            <person name="Yoshino R."/>
            <person name="Angata K."/>
            <person name="Iwamoto M."/>
            <person name="Pi M."/>
            <person name="Kuroe K."/>
            <person name="Matsuo K."/>
            <person name="Morio T."/>
            <person name="Urushihara H."/>
            <person name="Yanagisawa K."/>
            <person name="Tanaka Y."/>
        </authorList>
    </citation>
    <scope>NUCLEOTIDE SEQUENCE [LARGE SCALE GENOMIC DNA]</scope>
    <source>
        <strain>AX3</strain>
    </source>
</reference>
<evidence type="ECO:0000305" key="1"/>
<dbReference type="EMBL" id="D63523">
    <property type="protein sequence ID" value="BAA23571.1"/>
    <property type="molecule type" value="Genomic_DNA"/>
</dbReference>
<dbReference type="EMBL" id="AB000109">
    <property type="protein sequence ID" value="BAA78079.1"/>
    <property type="molecule type" value="Genomic_DNA"/>
</dbReference>
<dbReference type="PIR" id="T43776">
    <property type="entry name" value="T43776"/>
</dbReference>
<dbReference type="STRING" id="44689.O21034"/>
<dbReference type="KEGG" id="ddi:DidioMp30"/>
<dbReference type="dictyBase" id="DDB_G0294064">
    <property type="gene designation" value="DidioMp30"/>
</dbReference>
<dbReference type="VEuPathDB" id="AmoebaDB:DidioMp30"/>
<dbReference type="InParanoid" id="O21034"/>
<dbReference type="PRO" id="PR:O21034"/>
<dbReference type="Proteomes" id="UP000002195">
    <property type="component" value="Mitochondrion"/>
</dbReference>
<dbReference type="GO" id="GO:0005739">
    <property type="term" value="C:mitochondrion"/>
    <property type="evidence" value="ECO:0000304"/>
    <property type="project" value="dictyBase"/>
</dbReference>
<gene>
    <name type="primary">DidioMp30</name>
    <name type="ORF">DDB_G0294064</name>
</gene>
<comment type="subcellular location">
    <subcellularLocation>
        <location>Mitochondrion</location>
    </subcellularLocation>
</comment>
<comment type="miscellaneous">
    <text>Found in a 14.5 kb cluster region located downstream from rpl11 gene and upstream of orf796.</text>
</comment>
<comment type="caution">
    <text evidence="1">Some authors (PubMed:9560439, PubMed:10821186) called this protein rpl5, however rpl5 is a completely different protein and stands for 60S ribosomal protein L5.</text>
</comment>
<feature type="chain" id="PRO_0000376010" description="Uncharacterized mitochondrial protein 30">
    <location>
        <begin position="1"/>
        <end position="188"/>
    </location>
</feature>
<feature type="short sequence motif" description="L5-specific motif">
    <location>
        <begin position="62"/>
        <end position="77"/>
    </location>
</feature>
<proteinExistence type="predicted"/>
<sequence>MDNLQTYKLRLLDKYVLNKCMSLNRSNTSTIALDHVNIKMNYRKKKKEVYQMIELITLFEQITGEKPLIKLNESTEKNNVVKLEDFKLAVRLHKQKAKYFLNALCYVGLGERKYLTLKEENNIDLAQLKLSYRYKNLKIFRPILIRKDMNLEARLAIDIQYKTIGINNGQLTKYKFYLWKKNEFRITE</sequence>
<name>MP30_DICDI</name>
<organism>
    <name type="scientific">Dictyostelium discoideum</name>
    <name type="common">Social amoeba</name>
    <dbReference type="NCBI Taxonomy" id="44689"/>
    <lineage>
        <taxon>Eukaryota</taxon>
        <taxon>Amoebozoa</taxon>
        <taxon>Evosea</taxon>
        <taxon>Eumycetozoa</taxon>
        <taxon>Dictyostelia</taxon>
        <taxon>Dictyosteliales</taxon>
        <taxon>Dictyosteliaceae</taxon>
        <taxon>Dictyostelium</taxon>
    </lineage>
</organism>
<geneLocation type="mitochondrion"/>
<accession>O21034</accession>
<keyword id="KW-0496">Mitochondrion</keyword>
<keyword id="KW-1185">Reference proteome</keyword>
<protein>
    <recommendedName>
        <fullName>Uncharacterized mitochondrial protein 30</fullName>
    </recommendedName>
    <alternativeName>
        <fullName>ORF188</fullName>
    </alternativeName>
</protein>